<reference key="1">
    <citation type="journal article" date="2011" name="J. Bacteriol.">
        <title>Comparative genomics of 28 Salmonella enterica isolates: evidence for CRISPR-mediated adaptive sublineage evolution.</title>
        <authorList>
            <person name="Fricke W.F."/>
            <person name="Mammel M.K."/>
            <person name="McDermott P.F."/>
            <person name="Tartera C."/>
            <person name="White D.G."/>
            <person name="Leclerc J.E."/>
            <person name="Ravel J."/>
            <person name="Cebula T.A."/>
        </authorList>
    </citation>
    <scope>NUCLEOTIDE SEQUENCE [LARGE SCALE GENOMIC DNA]</scope>
    <source>
        <strain>SL254</strain>
    </source>
</reference>
<dbReference type="EMBL" id="CP001113">
    <property type="protein sequence ID" value="ACF62165.1"/>
    <property type="molecule type" value="Genomic_DNA"/>
</dbReference>
<dbReference type="RefSeq" id="WP_000804703.1">
    <property type="nucleotide sequence ID" value="NC_011080.1"/>
</dbReference>
<dbReference type="SMR" id="B4SUG2"/>
<dbReference type="KEGG" id="see:SNSL254_A1907"/>
<dbReference type="HOGENOM" id="CLU_036856_0_1_6"/>
<dbReference type="Proteomes" id="UP000008824">
    <property type="component" value="Chromosome"/>
</dbReference>
<dbReference type="GO" id="GO:0005737">
    <property type="term" value="C:cytoplasm"/>
    <property type="evidence" value="ECO:0007669"/>
    <property type="project" value="UniProtKB-SubCell"/>
</dbReference>
<dbReference type="GO" id="GO:0016149">
    <property type="term" value="F:translation release factor activity, codon specific"/>
    <property type="evidence" value="ECO:0007669"/>
    <property type="project" value="UniProtKB-UniRule"/>
</dbReference>
<dbReference type="FunFam" id="3.30.160.20:FF:000004">
    <property type="entry name" value="Peptide chain release factor 1"/>
    <property type="match status" value="1"/>
</dbReference>
<dbReference type="FunFam" id="3.30.70.1660:FF:000002">
    <property type="entry name" value="Peptide chain release factor 1"/>
    <property type="match status" value="1"/>
</dbReference>
<dbReference type="FunFam" id="3.30.70.1660:FF:000004">
    <property type="entry name" value="Peptide chain release factor 1"/>
    <property type="match status" value="1"/>
</dbReference>
<dbReference type="Gene3D" id="3.30.160.20">
    <property type="match status" value="1"/>
</dbReference>
<dbReference type="Gene3D" id="3.30.70.1660">
    <property type="match status" value="2"/>
</dbReference>
<dbReference type="Gene3D" id="6.10.140.1950">
    <property type="match status" value="1"/>
</dbReference>
<dbReference type="HAMAP" id="MF_00093">
    <property type="entry name" value="Rel_fac_1"/>
    <property type="match status" value="1"/>
</dbReference>
<dbReference type="InterPro" id="IPR005139">
    <property type="entry name" value="PCRF"/>
</dbReference>
<dbReference type="InterPro" id="IPR000352">
    <property type="entry name" value="Pep_chain_release_fac_I"/>
</dbReference>
<dbReference type="InterPro" id="IPR045853">
    <property type="entry name" value="Pep_chain_release_fac_I_sf"/>
</dbReference>
<dbReference type="InterPro" id="IPR050057">
    <property type="entry name" value="Prokaryotic/Mito_RF"/>
</dbReference>
<dbReference type="InterPro" id="IPR004373">
    <property type="entry name" value="RF-1"/>
</dbReference>
<dbReference type="NCBIfam" id="TIGR00019">
    <property type="entry name" value="prfA"/>
    <property type="match status" value="1"/>
</dbReference>
<dbReference type="NCBIfam" id="NF001859">
    <property type="entry name" value="PRK00591.1"/>
    <property type="match status" value="1"/>
</dbReference>
<dbReference type="PANTHER" id="PTHR43804">
    <property type="entry name" value="LD18447P"/>
    <property type="match status" value="1"/>
</dbReference>
<dbReference type="PANTHER" id="PTHR43804:SF7">
    <property type="entry name" value="LD18447P"/>
    <property type="match status" value="1"/>
</dbReference>
<dbReference type="Pfam" id="PF03462">
    <property type="entry name" value="PCRF"/>
    <property type="match status" value="1"/>
</dbReference>
<dbReference type="Pfam" id="PF00472">
    <property type="entry name" value="RF-1"/>
    <property type="match status" value="1"/>
</dbReference>
<dbReference type="SMART" id="SM00937">
    <property type="entry name" value="PCRF"/>
    <property type="match status" value="1"/>
</dbReference>
<dbReference type="SUPFAM" id="SSF75620">
    <property type="entry name" value="Release factor"/>
    <property type="match status" value="1"/>
</dbReference>
<dbReference type="PROSITE" id="PS00745">
    <property type="entry name" value="RF_PROK_I"/>
    <property type="match status" value="1"/>
</dbReference>
<gene>
    <name evidence="1" type="primary">prfA</name>
    <name type="ordered locus">SNSL254_A1907</name>
</gene>
<accession>B4SUG2</accession>
<organism>
    <name type="scientific">Salmonella newport (strain SL254)</name>
    <dbReference type="NCBI Taxonomy" id="423368"/>
    <lineage>
        <taxon>Bacteria</taxon>
        <taxon>Pseudomonadati</taxon>
        <taxon>Pseudomonadota</taxon>
        <taxon>Gammaproteobacteria</taxon>
        <taxon>Enterobacterales</taxon>
        <taxon>Enterobacteriaceae</taxon>
        <taxon>Salmonella</taxon>
    </lineage>
</organism>
<sequence>MKPSIVAKLEALHERHEEVQALLGDAGIIADQDRFRALSREYAQLSDVSRCFTDWQQVQDDIETAQMMLDDPEMREMAQEELREAKEKSEQLEQQLQVLLLPKDPDDERNAFLEVRAGTGGDEAALFAGDLFRMYSRYAEARRWRVEIMSMSEGEHGGYKEIIAKISGDGVYGRLKFESGGHRVQRVPATESQGRIHTSACTVAVMPELPEAELPDINPADLRIDTFRSSGAGGQHVNTTDSAIRITHLPTGIVVECQDERSQHKNKAKALSVLGARIHAAETAKRQQAEASTRRNLLGSGDRSDRNRTYNFPQGRVTDHRINLTLYRLDETMEGKLDMLIEPIVQEHQADLLAALSEQE</sequence>
<keyword id="KW-0963">Cytoplasm</keyword>
<keyword id="KW-0488">Methylation</keyword>
<keyword id="KW-0648">Protein biosynthesis</keyword>
<comment type="function">
    <text evidence="1">Peptide chain release factor 1 directs the termination of translation in response to the peptide chain termination codons UAG and UAA.</text>
</comment>
<comment type="subcellular location">
    <subcellularLocation>
        <location evidence="1">Cytoplasm</location>
    </subcellularLocation>
</comment>
<comment type="PTM">
    <text evidence="1">Methylated by PrmC. Methylation increases the termination efficiency of RF1.</text>
</comment>
<comment type="similarity">
    <text evidence="1">Belongs to the prokaryotic/mitochondrial release factor family.</text>
</comment>
<proteinExistence type="inferred from homology"/>
<name>RF1_SALNS</name>
<evidence type="ECO:0000255" key="1">
    <source>
        <dbReference type="HAMAP-Rule" id="MF_00093"/>
    </source>
</evidence>
<evidence type="ECO:0000256" key="2">
    <source>
        <dbReference type="SAM" id="MobiDB-lite"/>
    </source>
</evidence>
<protein>
    <recommendedName>
        <fullName evidence="1">Peptide chain release factor 1</fullName>
        <shortName evidence="1">RF-1</shortName>
    </recommendedName>
</protein>
<feature type="chain" id="PRO_1000093501" description="Peptide chain release factor 1">
    <location>
        <begin position="1"/>
        <end position="360"/>
    </location>
</feature>
<feature type="region of interest" description="Disordered" evidence="2">
    <location>
        <begin position="284"/>
        <end position="313"/>
    </location>
</feature>
<feature type="modified residue" description="N5-methylglutamine" evidence="1">
    <location>
        <position position="235"/>
    </location>
</feature>